<reference key="1">
    <citation type="journal article" date="2009" name="J. Bacteriol.">
        <title>The complete genome sequence of Helicobacter pylori strain G27.</title>
        <authorList>
            <person name="Baltrus D.A."/>
            <person name="Amieva M.R."/>
            <person name="Covacci A."/>
            <person name="Lowe T.M."/>
            <person name="Merrell D.S."/>
            <person name="Ottemann K.M."/>
            <person name="Stein M."/>
            <person name="Salama N.R."/>
            <person name="Guillemin K."/>
        </authorList>
    </citation>
    <scope>NUCLEOTIDE SEQUENCE [LARGE SCALE GENOMIC DNA]</scope>
    <source>
        <strain>G27</strain>
    </source>
</reference>
<protein>
    <recommendedName>
        <fullName evidence="1">Arginine--tRNA ligase</fullName>
        <ecNumber evidence="1">6.1.1.19</ecNumber>
    </recommendedName>
    <alternativeName>
        <fullName evidence="1">Arginyl-tRNA synthetase</fullName>
        <shortName evidence="1">ArgRS</shortName>
    </alternativeName>
</protein>
<name>SYR_HELPG</name>
<proteinExistence type="inferred from homology"/>
<keyword id="KW-0030">Aminoacyl-tRNA synthetase</keyword>
<keyword id="KW-0067">ATP-binding</keyword>
<keyword id="KW-0963">Cytoplasm</keyword>
<keyword id="KW-0436">Ligase</keyword>
<keyword id="KW-0547">Nucleotide-binding</keyword>
<keyword id="KW-0648">Protein biosynthesis</keyword>
<keyword id="KW-1185">Reference proteome</keyword>
<dbReference type="EC" id="6.1.1.19" evidence="1"/>
<dbReference type="EMBL" id="CP001173">
    <property type="protein sequence ID" value="ACI27066.1"/>
    <property type="molecule type" value="Genomic_DNA"/>
</dbReference>
<dbReference type="RefSeq" id="WP_000557198.1">
    <property type="nucleotide sequence ID" value="NC_011333.1"/>
</dbReference>
<dbReference type="SMR" id="B5ZA86"/>
<dbReference type="KEGG" id="hpg:HPG27_300"/>
<dbReference type="HOGENOM" id="CLU_006406_0_1_7"/>
<dbReference type="Proteomes" id="UP000001735">
    <property type="component" value="Chromosome"/>
</dbReference>
<dbReference type="GO" id="GO:0005737">
    <property type="term" value="C:cytoplasm"/>
    <property type="evidence" value="ECO:0007669"/>
    <property type="project" value="UniProtKB-SubCell"/>
</dbReference>
<dbReference type="GO" id="GO:0004814">
    <property type="term" value="F:arginine-tRNA ligase activity"/>
    <property type="evidence" value="ECO:0007669"/>
    <property type="project" value="UniProtKB-UniRule"/>
</dbReference>
<dbReference type="GO" id="GO:0005524">
    <property type="term" value="F:ATP binding"/>
    <property type="evidence" value="ECO:0007669"/>
    <property type="project" value="UniProtKB-UniRule"/>
</dbReference>
<dbReference type="GO" id="GO:0006420">
    <property type="term" value="P:arginyl-tRNA aminoacylation"/>
    <property type="evidence" value="ECO:0007669"/>
    <property type="project" value="UniProtKB-UniRule"/>
</dbReference>
<dbReference type="CDD" id="cd00671">
    <property type="entry name" value="ArgRS_core"/>
    <property type="match status" value="1"/>
</dbReference>
<dbReference type="FunFam" id="3.30.1360.70:FF:000008">
    <property type="entry name" value="Arginine--tRNA ligase"/>
    <property type="match status" value="1"/>
</dbReference>
<dbReference type="FunFam" id="3.40.50.620:FF:000062">
    <property type="entry name" value="Arginine--tRNA ligase"/>
    <property type="match status" value="1"/>
</dbReference>
<dbReference type="Gene3D" id="3.30.1360.70">
    <property type="entry name" value="Arginyl tRNA synthetase N-terminal domain"/>
    <property type="match status" value="1"/>
</dbReference>
<dbReference type="Gene3D" id="3.40.50.620">
    <property type="entry name" value="HUPs"/>
    <property type="match status" value="1"/>
</dbReference>
<dbReference type="Gene3D" id="1.10.730.10">
    <property type="entry name" value="Isoleucyl-tRNA Synthetase, Domain 1"/>
    <property type="match status" value="1"/>
</dbReference>
<dbReference type="HAMAP" id="MF_00123">
    <property type="entry name" value="Arg_tRNA_synth"/>
    <property type="match status" value="1"/>
</dbReference>
<dbReference type="InterPro" id="IPR001412">
    <property type="entry name" value="aa-tRNA-synth_I_CS"/>
</dbReference>
<dbReference type="InterPro" id="IPR001278">
    <property type="entry name" value="Arg-tRNA-ligase"/>
</dbReference>
<dbReference type="InterPro" id="IPR005148">
    <property type="entry name" value="Arg-tRNA-synth_N"/>
</dbReference>
<dbReference type="InterPro" id="IPR036695">
    <property type="entry name" value="Arg-tRNA-synth_N_sf"/>
</dbReference>
<dbReference type="InterPro" id="IPR035684">
    <property type="entry name" value="ArgRS_core"/>
</dbReference>
<dbReference type="InterPro" id="IPR008909">
    <property type="entry name" value="DALR_anticod-bd"/>
</dbReference>
<dbReference type="InterPro" id="IPR014729">
    <property type="entry name" value="Rossmann-like_a/b/a_fold"/>
</dbReference>
<dbReference type="InterPro" id="IPR009080">
    <property type="entry name" value="tRNAsynth_Ia_anticodon-bd"/>
</dbReference>
<dbReference type="NCBIfam" id="TIGR00456">
    <property type="entry name" value="argS"/>
    <property type="match status" value="1"/>
</dbReference>
<dbReference type="PANTHER" id="PTHR11956:SF5">
    <property type="entry name" value="ARGININE--TRNA LIGASE, CYTOPLASMIC"/>
    <property type="match status" value="1"/>
</dbReference>
<dbReference type="PANTHER" id="PTHR11956">
    <property type="entry name" value="ARGINYL-TRNA SYNTHETASE"/>
    <property type="match status" value="1"/>
</dbReference>
<dbReference type="Pfam" id="PF03485">
    <property type="entry name" value="Arg_tRNA_synt_N"/>
    <property type="match status" value="1"/>
</dbReference>
<dbReference type="Pfam" id="PF05746">
    <property type="entry name" value="DALR_1"/>
    <property type="match status" value="1"/>
</dbReference>
<dbReference type="Pfam" id="PF00750">
    <property type="entry name" value="tRNA-synt_1d"/>
    <property type="match status" value="1"/>
</dbReference>
<dbReference type="PRINTS" id="PR01038">
    <property type="entry name" value="TRNASYNTHARG"/>
</dbReference>
<dbReference type="SMART" id="SM01016">
    <property type="entry name" value="Arg_tRNA_synt_N"/>
    <property type="match status" value="1"/>
</dbReference>
<dbReference type="SMART" id="SM00836">
    <property type="entry name" value="DALR_1"/>
    <property type="match status" value="1"/>
</dbReference>
<dbReference type="SUPFAM" id="SSF47323">
    <property type="entry name" value="Anticodon-binding domain of a subclass of class I aminoacyl-tRNA synthetases"/>
    <property type="match status" value="1"/>
</dbReference>
<dbReference type="SUPFAM" id="SSF55190">
    <property type="entry name" value="Arginyl-tRNA synthetase (ArgRS), N-terminal 'additional' domain"/>
    <property type="match status" value="1"/>
</dbReference>
<dbReference type="SUPFAM" id="SSF52374">
    <property type="entry name" value="Nucleotidylyl transferase"/>
    <property type="match status" value="1"/>
</dbReference>
<dbReference type="PROSITE" id="PS00178">
    <property type="entry name" value="AA_TRNA_LIGASE_I"/>
    <property type="match status" value="1"/>
</dbReference>
<sequence length="541" mass="62127">MHTLIKGVLEEILEEEVIIEYPKDREHGHYATPIAFNLAKVFKKSPLVIAEELALKISTHKKTQGLFDSVVACKGYINFTLSLGFLERFTQKALELKEQFGSQIKSERSQKIFLEFVSANPTGPLHIGHARGAVFGDSLAKIARFLGHEVLCEYYVNDMGSQIRLLGLSVWLAYREHVLKESVTYPEVFYKGEYIIEIAKKANNDLEPSLFKENEETIIGVLSGYAKDLMLLEIKDNLDALGIHFDSYASEKEVFKHKDAVFERLEKANALYEKDSKIWLKSSLYQDESDRVLVKEDKSYTYLTGDVIYHDKKFKQDYTKYINIWGADHHGYIARVKASLEFLGYDSNKLEVLLAQMVRLLKDNEPYKMSKRAGNFILIKDVVDDVGRDALRFIFLSKRLDTHLEFDVNTLKKQDSSNPIYYIHYANSRIHTMLEKSPFSKEEVLQTPLKNLNAEEKYLLFSALSLPKAIESSFEEYGLQKMCEYAKTLASEFHRFYNAGKILDTPKTKELLKICLMVSLSLTNAFKLLGIEIKTKISAKD</sequence>
<feature type="chain" id="PRO_1000095370" description="Arginine--tRNA ligase">
    <location>
        <begin position="1"/>
        <end position="541"/>
    </location>
</feature>
<feature type="short sequence motif" description="'HIGH' region">
    <location>
        <begin position="119"/>
        <end position="129"/>
    </location>
</feature>
<comment type="catalytic activity">
    <reaction evidence="1">
        <text>tRNA(Arg) + L-arginine + ATP = L-arginyl-tRNA(Arg) + AMP + diphosphate</text>
        <dbReference type="Rhea" id="RHEA:20301"/>
        <dbReference type="Rhea" id="RHEA-COMP:9658"/>
        <dbReference type="Rhea" id="RHEA-COMP:9673"/>
        <dbReference type="ChEBI" id="CHEBI:30616"/>
        <dbReference type="ChEBI" id="CHEBI:32682"/>
        <dbReference type="ChEBI" id="CHEBI:33019"/>
        <dbReference type="ChEBI" id="CHEBI:78442"/>
        <dbReference type="ChEBI" id="CHEBI:78513"/>
        <dbReference type="ChEBI" id="CHEBI:456215"/>
        <dbReference type="EC" id="6.1.1.19"/>
    </reaction>
</comment>
<comment type="subunit">
    <text evidence="1">Monomer.</text>
</comment>
<comment type="subcellular location">
    <subcellularLocation>
        <location evidence="1">Cytoplasm</location>
    </subcellularLocation>
</comment>
<comment type="similarity">
    <text evidence="1">Belongs to the class-I aminoacyl-tRNA synthetase family.</text>
</comment>
<gene>
    <name evidence="1" type="primary">argS</name>
    <name type="ordered locus">HPG27_300</name>
</gene>
<evidence type="ECO:0000255" key="1">
    <source>
        <dbReference type="HAMAP-Rule" id="MF_00123"/>
    </source>
</evidence>
<organism>
    <name type="scientific">Helicobacter pylori (strain G27)</name>
    <dbReference type="NCBI Taxonomy" id="563041"/>
    <lineage>
        <taxon>Bacteria</taxon>
        <taxon>Pseudomonadati</taxon>
        <taxon>Campylobacterota</taxon>
        <taxon>Epsilonproteobacteria</taxon>
        <taxon>Campylobacterales</taxon>
        <taxon>Helicobacteraceae</taxon>
        <taxon>Helicobacter</taxon>
    </lineage>
</organism>
<accession>B5ZA86</accession>